<keyword id="KW-1005">Bacterial flagellum biogenesis</keyword>
<keyword id="KW-0143">Chaperone</keyword>
<keyword id="KW-0963">Cytoplasm</keyword>
<keyword id="KW-1185">Reference proteome</keyword>
<keyword id="KW-0678">Repressor</keyword>
<keyword id="KW-0804">Transcription</keyword>
<keyword id="KW-0805">Transcription regulation</keyword>
<evidence type="ECO:0000255" key="1">
    <source>
        <dbReference type="HAMAP-Rule" id="MF_01180"/>
    </source>
</evidence>
<evidence type="ECO:0000305" key="2"/>
<gene>
    <name evidence="1" type="primary">fliT</name>
    <name type="ordered locus">YPO1839</name>
    <name type="ordered locus">y2468</name>
    <name type="ordered locus">YP_1554</name>
</gene>
<organism>
    <name type="scientific">Yersinia pestis</name>
    <dbReference type="NCBI Taxonomy" id="632"/>
    <lineage>
        <taxon>Bacteria</taxon>
        <taxon>Pseudomonadati</taxon>
        <taxon>Pseudomonadota</taxon>
        <taxon>Gammaproteobacteria</taxon>
        <taxon>Enterobacterales</taxon>
        <taxon>Yersiniaceae</taxon>
        <taxon>Yersinia</taxon>
    </lineage>
</organism>
<feature type="chain" id="PRO_0000353896" description="Flagellar protein FliT">
    <location>
        <begin position="1"/>
        <end position="120"/>
    </location>
</feature>
<feature type="region of interest" description="Required for homodimerization" evidence="1">
    <location>
        <begin position="1"/>
        <end position="50"/>
    </location>
</feature>
<feature type="region of interest" description="FliD binding" evidence="1">
    <location>
        <begin position="60"/>
        <end position="98"/>
    </location>
</feature>
<proteinExistence type="inferred from homology"/>
<reference key="1">
    <citation type="journal article" date="2001" name="Nature">
        <title>Genome sequence of Yersinia pestis, the causative agent of plague.</title>
        <authorList>
            <person name="Parkhill J."/>
            <person name="Wren B.W."/>
            <person name="Thomson N.R."/>
            <person name="Titball R.W."/>
            <person name="Holden M.T.G."/>
            <person name="Prentice M.B."/>
            <person name="Sebaihia M."/>
            <person name="James K.D."/>
            <person name="Churcher C.M."/>
            <person name="Mungall K.L."/>
            <person name="Baker S."/>
            <person name="Basham D."/>
            <person name="Bentley S.D."/>
            <person name="Brooks K."/>
            <person name="Cerdeno-Tarraga A.-M."/>
            <person name="Chillingworth T."/>
            <person name="Cronin A."/>
            <person name="Davies R.M."/>
            <person name="Davis P."/>
            <person name="Dougan G."/>
            <person name="Feltwell T."/>
            <person name="Hamlin N."/>
            <person name="Holroyd S."/>
            <person name="Jagels K."/>
            <person name="Karlyshev A.V."/>
            <person name="Leather S."/>
            <person name="Moule S."/>
            <person name="Oyston P.C.F."/>
            <person name="Quail M.A."/>
            <person name="Rutherford K.M."/>
            <person name="Simmonds M."/>
            <person name="Skelton J."/>
            <person name="Stevens K."/>
            <person name="Whitehead S."/>
            <person name="Barrell B.G."/>
        </authorList>
    </citation>
    <scope>NUCLEOTIDE SEQUENCE [LARGE SCALE GENOMIC DNA]</scope>
    <source>
        <strain>CO-92 / Biovar Orientalis</strain>
    </source>
</reference>
<reference key="2">
    <citation type="journal article" date="2002" name="J. Bacteriol.">
        <title>Genome sequence of Yersinia pestis KIM.</title>
        <authorList>
            <person name="Deng W."/>
            <person name="Burland V."/>
            <person name="Plunkett G. III"/>
            <person name="Boutin A."/>
            <person name="Mayhew G.F."/>
            <person name="Liss P."/>
            <person name="Perna N.T."/>
            <person name="Rose D.J."/>
            <person name="Mau B."/>
            <person name="Zhou S."/>
            <person name="Schwartz D.C."/>
            <person name="Fetherston J.D."/>
            <person name="Lindler L.E."/>
            <person name="Brubaker R.R."/>
            <person name="Plano G.V."/>
            <person name="Straley S.C."/>
            <person name="McDonough K.A."/>
            <person name="Nilles M.L."/>
            <person name="Matson J.S."/>
            <person name="Blattner F.R."/>
            <person name="Perry R.D."/>
        </authorList>
    </citation>
    <scope>NUCLEOTIDE SEQUENCE [LARGE SCALE GENOMIC DNA]</scope>
    <source>
        <strain>KIM10+ / Biovar Mediaevalis</strain>
    </source>
</reference>
<reference key="3">
    <citation type="journal article" date="2004" name="DNA Res.">
        <title>Complete genome sequence of Yersinia pestis strain 91001, an isolate avirulent to humans.</title>
        <authorList>
            <person name="Song Y."/>
            <person name="Tong Z."/>
            <person name="Wang J."/>
            <person name="Wang L."/>
            <person name="Guo Z."/>
            <person name="Han Y."/>
            <person name="Zhang J."/>
            <person name="Pei D."/>
            <person name="Zhou D."/>
            <person name="Qin H."/>
            <person name="Pang X."/>
            <person name="Han Y."/>
            <person name="Zhai J."/>
            <person name="Li M."/>
            <person name="Cui B."/>
            <person name="Qi Z."/>
            <person name="Jin L."/>
            <person name="Dai R."/>
            <person name="Chen F."/>
            <person name="Li S."/>
            <person name="Ye C."/>
            <person name="Du Z."/>
            <person name="Lin W."/>
            <person name="Wang J."/>
            <person name="Yu J."/>
            <person name="Yang H."/>
            <person name="Wang J."/>
            <person name="Huang P."/>
            <person name="Yang R."/>
        </authorList>
    </citation>
    <scope>NUCLEOTIDE SEQUENCE [LARGE SCALE GENOMIC DNA]</scope>
    <source>
        <strain>91001 / Biovar Mediaevalis</strain>
    </source>
</reference>
<sequence>MERHQHLLSEYQQILTLSEQMLMLATVENWNALVDLEMTYLKAVENTANITISSCTSPVLQELLRQKLRSILENEIEIKRLLQRRLDKLSELVGQSTRQQAVNRTYGQFPDQALLLGETQ</sequence>
<name>FLIT_YERPE</name>
<dbReference type="EMBL" id="AL590842">
    <property type="protein sequence ID" value="CAL20479.1"/>
    <property type="molecule type" value="Genomic_DNA"/>
</dbReference>
<dbReference type="EMBL" id="AE009952">
    <property type="protein sequence ID" value="AAM86025.1"/>
    <property type="status" value="ALT_INIT"/>
    <property type="molecule type" value="Genomic_DNA"/>
</dbReference>
<dbReference type="EMBL" id="AE017042">
    <property type="protein sequence ID" value="AAS61789.1"/>
    <property type="status" value="ALT_INIT"/>
    <property type="molecule type" value="Genomic_DNA"/>
</dbReference>
<dbReference type="PIR" id="AD0224">
    <property type="entry name" value="AD0224"/>
</dbReference>
<dbReference type="RefSeq" id="WP_002211148.1">
    <property type="nucleotide sequence ID" value="NZ_WUCM01000005.1"/>
</dbReference>
<dbReference type="RefSeq" id="YP_002346833.1">
    <property type="nucleotide sequence ID" value="NC_003143.1"/>
</dbReference>
<dbReference type="SMR" id="Q8D0B5"/>
<dbReference type="STRING" id="214092.YPO1839"/>
<dbReference type="PaxDb" id="214092-YPO1839"/>
<dbReference type="DNASU" id="1147415"/>
<dbReference type="EnsemblBacteria" id="AAS61789">
    <property type="protein sequence ID" value="AAS61789"/>
    <property type="gene ID" value="YP_1554"/>
</dbReference>
<dbReference type="GeneID" id="57976742"/>
<dbReference type="KEGG" id="ype:YPO1839"/>
<dbReference type="KEGG" id="ypk:y2468"/>
<dbReference type="KEGG" id="ypm:YP_1554"/>
<dbReference type="PATRIC" id="fig|214092.21.peg.2200"/>
<dbReference type="eggNOG" id="ENOG5032ZV7">
    <property type="taxonomic scope" value="Bacteria"/>
</dbReference>
<dbReference type="HOGENOM" id="CLU_155793_1_0_6"/>
<dbReference type="OMA" id="DMEITYL"/>
<dbReference type="OrthoDB" id="6494117at2"/>
<dbReference type="Proteomes" id="UP000000815">
    <property type="component" value="Chromosome"/>
</dbReference>
<dbReference type="Proteomes" id="UP000001019">
    <property type="component" value="Chromosome"/>
</dbReference>
<dbReference type="Proteomes" id="UP000002490">
    <property type="component" value="Chromosome"/>
</dbReference>
<dbReference type="GO" id="GO:0005829">
    <property type="term" value="C:cytosol"/>
    <property type="evidence" value="ECO:0007669"/>
    <property type="project" value="UniProtKB-SubCell"/>
</dbReference>
<dbReference type="GO" id="GO:0044781">
    <property type="term" value="P:bacterial-type flagellum organization"/>
    <property type="evidence" value="ECO:0007669"/>
    <property type="project" value="UniProtKB-KW"/>
</dbReference>
<dbReference type="GO" id="GO:1902209">
    <property type="term" value="P:negative regulation of bacterial-type flagellum assembly"/>
    <property type="evidence" value="ECO:0007669"/>
    <property type="project" value="UniProtKB-UniRule"/>
</dbReference>
<dbReference type="GO" id="GO:0006457">
    <property type="term" value="P:protein folding"/>
    <property type="evidence" value="ECO:0007669"/>
    <property type="project" value="UniProtKB-UniRule"/>
</dbReference>
<dbReference type="Gene3D" id="1.20.58.380">
    <property type="entry name" value="Flagellar protein flit"/>
    <property type="match status" value="1"/>
</dbReference>
<dbReference type="HAMAP" id="MF_01180">
    <property type="entry name" value="FliT"/>
    <property type="match status" value="1"/>
</dbReference>
<dbReference type="InterPro" id="IPR008622">
    <property type="entry name" value="FliT"/>
</dbReference>
<dbReference type="NCBIfam" id="NF007836">
    <property type="entry name" value="PRK10548.1"/>
    <property type="match status" value="1"/>
</dbReference>
<dbReference type="Pfam" id="PF05400">
    <property type="entry name" value="FliT"/>
    <property type="match status" value="1"/>
</dbReference>
<accession>Q8D0B5</accession>
<accession>Q0WFV5</accession>
<accession>Q74UY6</accession>
<comment type="function">
    <text evidence="1">Dual-function protein that regulates the transcription of class 2 flagellar operons and that also acts as an export chaperone for the filament-capping protein FliD. As a transcriptional regulator, acts as an anti-FlhDC factor; it directly binds FlhC, thus inhibiting the binding of the FlhC/FlhD complex to class 2 promoters, resulting in decreased expression of class 2 flagellar operons. As a chaperone, effects FliD transition to the membrane by preventing its premature polymerization, and by directing it to the export apparatus.</text>
</comment>
<comment type="subunit">
    <text evidence="1">Homodimer. Interacts with FliD and FlhC.</text>
</comment>
<comment type="subcellular location">
    <subcellularLocation>
        <location evidence="1">Cytoplasm</location>
        <location evidence="1">Cytosol</location>
    </subcellularLocation>
</comment>
<comment type="similarity">
    <text evidence="1">Belongs to the FliT family.</text>
</comment>
<comment type="sequence caution" evidence="2">
    <conflict type="erroneous initiation">
        <sequence resource="EMBL-CDS" id="AAM86025"/>
    </conflict>
</comment>
<comment type="sequence caution" evidence="2">
    <conflict type="erroneous initiation">
        <sequence resource="EMBL-CDS" id="AAS61789"/>
    </conflict>
</comment>
<protein>
    <recommendedName>
        <fullName evidence="1">Flagellar protein FliT</fullName>
    </recommendedName>
</protein>